<organism>
    <name type="scientific">Drosophila melanogaster</name>
    <name type="common">Fruit fly</name>
    <dbReference type="NCBI Taxonomy" id="7227"/>
    <lineage>
        <taxon>Eukaryota</taxon>
        <taxon>Metazoa</taxon>
        <taxon>Ecdysozoa</taxon>
        <taxon>Arthropoda</taxon>
        <taxon>Hexapoda</taxon>
        <taxon>Insecta</taxon>
        <taxon>Pterygota</taxon>
        <taxon>Neoptera</taxon>
        <taxon>Endopterygota</taxon>
        <taxon>Diptera</taxon>
        <taxon>Brachycera</taxon>
        <taxon>Muscomorpha</taxon>
        <taxon>Ephydroidea</taxon>
        <taxon>Drosophilidae</taxon>
        <taxon>Drosophila</taxon>
        <taxon>Sophophora</taxon>
    </lineage>
</organism>
<gene>
    <name type="primary">CkIIbeta</name>
    <name type="synonym">Cask-II-b</name>
    <name type="ORF">CG15224</name>
</gene>
<comment type="function">
    <text evidence="1 3">Participates in Wnt signaling (By similarity). Plays a complex role in regulating the basal catalytic activity of the alpha subunit.</text>
</comment>
<comment type="subunit">
    <text>Tetramer of two alpha and two beta subunits.</text>
</comment>
<comment type="alternative products">
    <event type="alternative splicing"/>
    <isoform>
        <id>P08182-1</id>
        <name>E</name>
        <sequence type="displayed"/>
    </isoform>
    <isoform>
        <id>P08182-3</id>
        <name>B</name>
        <name>G</name>
        <sequence type="described" ref="VSP_011641"/>
    </isoform>
</comment>
<comment type="PTM">
    <text evidence="1">Phosphorylated by alpha subunit.</text>
</comment>
<comment type="similarity">
    <text evidence="6">Belongs to the casein kinase 2 subunit beta family.</text>
</comment>
<keyword id="KW-0025">Alternative splicing</keyword>
<keyword id="KW-0597">Phosphoprotein</keyword>
<keyword id="KW-1185">Reference proteome</keyword>
<keyword id="KW-0879">Wnt signaling pathway</keyword>
<name>CSK2B_DROME</name>
<accession>P08182</accession>
<accession>Q76NS4</accession>
<accession>Q9VYU4</accession>
<dbReference type="EMBL" id="M16535">
    <property type="protein sequence ID" value="AAA28430.1"/>
    <property type="molecule type" value="mRNA"/>
</dbReference>
<dbReference type="EMBL" id="U52952">
    <property type="protein sequence ID" value="AAC13880.1"/>
    <property type="molecule type" value="Genomic_DNA"/>
</dbReference>
<dbReference type="EMBL" id="AE014298">
    <property type="protein sequence ID" value="AAF48092.3"/>
    <property type="molecule type" value="Genomic_DNA"/>
</dbReference>
<dbReference type="EMBL" id="AE014298">
    <property type="protein sequence ID" value="AAF48093.1"/>
    <property type="molecule type" value="Genomic_DNA"/>
</dbReference>
<dbReference type="EMBL" id="AE014298">
    <property type="protein sequence ID" value="AAS65321.1"/>
    <property type="molecule type" value="Genomic_DNA"/>
</dbReference>
<dbReference type="EMBL" id="AY113447">
    <property type="protein sequence ID" value="AAM29452.1"/>
    <property type="molecule type" value="mRNA"/>
</dbReference>
<dbReference type="RefSeq" id="NP_001014731.1">
    <molecule id="P08182-3"/>
    <property type="nucleotide sequence ID" value="NM_001014731.2"/>
</dbReference>
<dbReference type="RefSeq" id="NP_001245628.1">
    <molecule id="P08182-3"/>
    <property type="nucleotide sequence ID" value="NM_001258699.1"/>
</dbReference>
<dbReference type="RefSeq" id="NP_511131.3">
    <molecule id="P08182-3"/>
    <property type="nucleotide sequence ID" value="NM_078576.5"/>
</dbReference>
<dbReference type="RefSeq" id="NP_542940.1">
    <molecule id="P08182-3"/>
    <property type="nucleotide sequence ID" value="NM_080762.4"/>
</dbReference>
<dbReference type="RefSeq" id="NP_727561.1">
    <molecule id="P08182-3"/>
    <property type="nucleotide sequence ID" value="NM_167304.3"/>
</dbReference>
<dbReference type="RefSeq" id="NP_727562.1">
    <molecule id="P08182-3"/>
    <property type="nucleotide sequence ID" value="NM_167305.3"/>
</dbReference>
<dbReference type="RefSeq" id="NP_996415.1">
    <molecule id="P08182-1"/>
    <property type="nucleotide sequence ID" value="NM_206692.3"/>
</dbReference>
<dbReference type="SMR" id="P08182"/>
<dbReference type="BioGRID" id="58538">
    <property type="interactions" value="65"/>
</dbReference>
<dbReference type="DIP" id="DIP-17048N"/>
<dbReference type="FunCoup" id="P08182">
    <property type="interactions" value="2193"/>
</dbReference>
<dbReference type="IntAct" id="P08182">
    <property type="interactions" value="27"/>
</dbReference>
<dbReference type="MINT" id="P08182"/>
<dbReference type="STRING" id="7227.FBpp0089135"/>
<dbReference type="iPTMnet" id="P08182"/>
<dbReference type="PaxDb" id="7227-FBpp0089135"/>
<dbReference type="DNASU" id="32132"/>
<dbReference type="EnsemblMetazoa" id="FBtr0073558">
    <molecule id="P08182-3"/>
    <property type="protein sequence ID" value="FBpp0073403"/>
    <property type="gene ID" value="FBgn0000259"/>
</dbReference>
<dbReference type="EnsemblMetazoa" id="FBtr0073560">
    <molecule id="P08182-3"/>
    <property type="protein sequence ID" value="FBpp0073405"/>
    <property type="gene ID" value="FBgn0000259"/>
</dbReference>
<dbReference type="EnsemblMetazoa" id="FBtr0073561">
    <molecule id="P08182-3"/>
    <property type="protein sequence ID" value="FBpp0073406"/>
    <property type="gene ID" value="FBgn0000259"/>
</dbReference>
<dbReference type="EnsemblMetazoa" id="FBtr0073562">
    <molecule id="P08182-1"/>
    <property type="protein sequence ID" value="FBpp0089135"/>
    <property type="gene ID" value="FBgn0000259"/>
</dbReference>
<dbReference type="EnsemblMetazoa" id="FBtr0100540">
    <molecule id="P08182-3"/>
    <property type="protein sequence ID" value="FBpp0099985"/>
    <property type="gene ID" value="FBgn0000259"/>
</dbReference>
<dbReference type="EnsemblMetazoa" id="FBtr0299569">
    <molecule id="P08182-3"/>
    <property type="protein sequence ID" value="FBpp0288844"/>
    <property type="gene ID" value="FBgn0000259"/>
</dbReference>
<dbReference type="EnsemblMetazoa" id="FBtr0307896">
    <molecule id="P08182-3"/>
    <property type="protein sequence ID" value="FBpp0300330"/>
    <property type="gene ID" value="FBgn0000259"/>
</dbReference>
<dbReference type="GeneID" id="32132"/>
<dbReference type="KEGG" id="dme:Dmel_CG15224"/>
<dbReference type="AGR" id="FB:FBgn0000259"/>
<dbReference type="CTD" id="32132"/>
<dbReference type="FlyBase" id="FBgn0000259">
    <property type="gene designation" value="CkIIbeta"/>
</dbReference>
<dbReference type="VEuPathDB" id="VectorBase:FBgn0000259"/>
<dbReference type="eggNOG" id="KOG3092">
    <property type="taxonomic scope" value="Eukaryota"/>
</dbReference>
<dbReference type="GeneTree" id="ENSGT00390000003781"/>
<dbReference type="InParanoid" id="P08182"/>
<dbReference type="OMA" id="DADFGRC"/>
<dbReference type="OrthoDB" id="3971593at2759"/>
<dbReference type="PhylomeDB" id="P08182"/>
<dbReference type="Reactome" id="R-DME-201688">
    <property type="pathway name" value="WNT mediated activation of DVL"/>
</dbReference>
<dbReference type="Reactome" id="R-DME-209190">
    <property type="pathway name" value="Phosphorylation of CI"/>
</dbReference>
<dbReference type="Reactome" id="R-DME-209214">
    <property type="pathway name" value="Phosphorylation of SMO"/>
</dbReference>
<dbReference type="Reactome" id="R-DME-2514853">
    <property type="pathway name" value="Condensation of Prometaphase Chromosomes"/>
</dbReference>
<dbReference type="Reactome" id="R-DME-432553">
    <property type="pathway name" value="Phosphorylation of PER and TIM"/>
</dbReference>
<dbReference type="Reactome" id="R-DME-6798695">
    <property type="pathway name" value="Neutrophil degranulation"/>
</dbReference>
<dbReference type="Reactome" id="R-DME-6804756">
    <property type="pathway name" value="Regulation of TP53 Activity through Phosphorylation"/>
</dbReference>
<dbReference type="Reactome" id="R-DME-6814122">
    <property type="pathway name" value="Cooperation of PDCL (PhLP1) and TRiC/CCT in G-protein beta folding"/>
</dbReference>
<dbReference type="Reactome" id="R-DME-8934903">
    <property type="pathway name" value="Receptor Mediated Mitophagy"/>
</dbReference>
<dbReference type="Reactome" id="R-DME-8948751">
    <property type="pathway name" value="Regulation of PTEN stability and activity"/>
</dbReference>
<dbReference type="SignaLink" id="P08182"/>
<dbReference type="BioGRID-ORCS" id="32132">
    <property type="hits" value="2 hits in 3 CRISPR screens"/>
</dbReference>
<dbReference type="ChiTaRS" id="CkIIbeta">
    <property type="organism name" value="fly"/>
</dbReference>
<dbReference type="GenomeRNAi" id="32132"/>
<dbReference type="PRO" id="PR:P08182"/>
<dbReference type="Proteomes" id="UP000000803">
    <property type="component" value="Chromosome X"/>
</dbReference>
<dbReference type="Bgee" id="FBgn0000259">
    <property type="expression patterns" value="Expressed in enteroblast (Drosophila) in digestive tract and 280 other cell types or tissues"/>
</dbReference>
<dbReference type="ExpressionAtlas" id="P08182">
    <property type="expression patterns" value="baseline and differential"/>
</dbReference>
<dbReference type="GO" id="GO:0005737">
    <property type="term" value="C:cytoplasm"/>
    <property type="evidence" value="ECO:0000318"/>
    <property type="project" value="GO_Central"/>
</dbReference>
<dbReference type="GO" id="GO:0005829">
    <property type="term" value="C:cytosol"/>
    <property type="evidence" value="ECO:0000314"/>
    <property type="project" value="FlyBase"/>
</dbReference>
<dbReference type="GO" id="GO:0031594">
    <property type="term" value="C:neuromuscular junction"/>
    <property type="evidence" value="ECO:0000314"/>
    <property type="project" value="SynGO"/>
</dbReference>
<dbReference type="GO" id="GO:0005634">
    <property type="term" value="C:nucleus"/>
    <property type="evidence" value="ECO:0000314"/>
    <property type="project" value="FlyBase"/>
</dbReference>
<dbReference type="GO" id="GO:0099523">
    <property type="term" value="C:presynaptic cytosol"/>
    <property type="evidence" value="ECO:0000314"/>
    <property type="project" value="SynGO"/>
</dbReference>
<dbReference type="GO" id="GO:0005956">
    <property type="term" value="C:protein kinase CK2 complex"/>
    <property type="evidence" value="ECO:0000314"/>
    <property type="project" value="FlyBase"/>
</dbReference>
<dbReference type="GO" id="GO:0019887">
    <property type="term" value="F:protein kinase regulator activity"/>
    <property type="evidence" value="ECO:0000314"/>
    <property type="project" value="FlyBase"/>
</dbReference>
<dbReference type="GO" id="GO:0007623">
    <property type="term" value="P:circadian rhythm"/>
    <property type="evidence" value="ECO:0000315"/>
    <property type="project" value="FlyBase"/>
</dbReference>
<dbReference type="GO" id="GO:0008062">
    <property type="term" value="P:eclosion rhythm"/>
    <property type="evidence" value="ECO:0000304"/>
    <property type="project" value="FlyBase"/>
</dbReference>
<dbReference type="GO" id="GO:0060810">
    <property type="term" value="P:intracellular mRNA localization involved in pattern specification process"/>
    <property type="evidence" value="ECO:0000316"/>
    <property type="project" value="FlyBase"/>
</dbReference>
<dbReference type="GO" id="GO:0045475">
    <property type="term" value="P:locomotor rhythm"/>
    <property type="evidence" value="ECO:0000315"/>
    <property type="project" value="FlyBase"/>
</dbReference>
<dbReference type="GO" id="GO:0016319">
    <property type="term" value="P:mushroom body development"/>
    <property type="evidence" value="ECO:0000315"/>
    <property type="project" value="FlyBase"/>
</dbReference>
<dbReference type="GO" id="GO:0007310">
    <property type="term" value="P:oocyte dorsal/ventral axis specification"/>
    <property type="evidence" value="ECO:0000315"/>
    <property type="project" value="FlyBase"/>
</dbReference>
<dbReference type="GO" id="GO:0050807">
    <property type="term" value="P:regulation of synapse organization"/>
    <property type="evidence" value="ECO:0000314"/>
    <property type="project" value="SynGO"/>
</dbReference>
<dbReference type="GO" id="GO:0007622">
    <property type="term" value="P:rhythmic behavior"/>
    <property type="evidence" value="ECO:0000304"/>
    <property type="project" value="FlyBase"/>
</dbReference>
<dbReference type="GO" id="GO:0016055">
    <property type="term" value="P:Wnt signaling pathway"/>
    <property type="evidence" value="ECO:0007669"/>
    <property type="project" value="UniProtKB-KW"/>
</dbReference>
<dbReference type="FunFam" id="1.10.1820.10:FF:000001">
    <property type="entry name" value="Casein kinase II subunit beta"/>
    <property type="match status" value="1"/>
</dbReference>
<dbReference type="FunFam" id="2.20.25.20:FF:000002">
    <property type="entry name" value="Casein kinase II subunit beta"/>
    <property type="match status" value="1"/>
</dbReference>
<dbReference type="Gene3D" id="2.20.25.20">
    <property type="match status" value="1"/>
</dbReference>
<dbReference type="Gene3D" id="1.10.1820.10">
    <property type="entry name" value="protein kinase ck2 holoenzyme, chain C, domain 1"/>
    <property type="match status" value="1"/>
</dbReference>
<dbReference type="InterPro" id="IPR016149">
    <property type="entry name" value="Casein_kin_II_reg-sub_N"/>
</dbReference>
<dbReference type="InterPro" id="IPR035991">
    <property type="entry name" value="Casein_kinase_II_beta-like"/>
</dbReference>
<dbReference type="InterPro" id="IPR000704">
    <property type="entry name" value="Casein_kinase_II_reg-sub"/>
</dbReference>
<dbReference type="PANTHER" id="PTHR11740">
    <property type="entry name" value="CASEIN KINASE II SUBUNIT BETA"/>
    <property type="match status" value="1"/>
</dbReference>
<dbReference type="PANTHER" id="PTHR11740:SF0">
    <property type="entry name" value="CASEIN KINASE II SUBUNIT BETA"/>
    <property type="match status" value="1"/>
</dbReference>
<dbReference type="Pfam" id="PF01214">
    <property type="entry name" value="CK_II_beta"/>
    <property type="match status" value="1"/>
</dbReference>
<dbReference type="PRINTS" id="PR00472">
    <property type="entry name" value="CASNKINASEII"/>
</dbReference>
<dbReference type="SMART" id="SM01085">
    <property type="entry name" value="CK_II_beta"/>
    <property type="match status" value="1"/>
</dbReference>
<dbReference type="SUPFAM" id="SSF57798">
    <property type="entry name" value="Casein kinase II beta subunit"/>
    <property type="match status" value="1"/>
</dbReference>
<dbReference type="PROSITE" id="PS01101">
    <property type="entry name" value="CK2_BETA"/>
    <property type="match status" value="1"/>
</dbReference>
<sequence length="235" mass="27088">MSSSEEVSWVTWFCGLRGNEFFCEVDEDYIQDKFNLTGLNEQVPNYRQALDMILDLEPEDELEDNPLQSDMTEQAAEMLYGLIHARYILTNRGIAQMIEKYQTGDFGHCPRVYCESQPMLPLGLSDIPGEAMVKTYCPKCIDVYTPKSSRHHHTDGAYFGTGFPHMLFMVHPEYRPKRPTNQFVPRLYGFKIHSLAYQIQLQAAANFKMPLRAQRGQPPKDEEPENNADTVPKRL</sequence>
<protein>
    <recommendedName>
        <fullName>Casein kinase II subunit beta</fullName>
        <shortName>CK II beta</shortName>
    </recommendedName>
</protein>
<reference key="1">
    <citation type="journal article" date="1987" name="Mol. Cell. Biol.">
        <title>Isolation and sequencing of cDNA clones encoding alpha and beta subunits of Drosophila melanogaster casein kinase II.</title>
        <authorList>
            <person name="Saxena A."/>
            <person name="Padmanabha R."/>
            <person name="Glover C.V.C."/>
        </authorList>
    </citation>
    <scope>NUCLEOTIDE SEQUENCE [MRNA] (ISOFORM B)</scope>
    <scope>FUNCTION</scope>
</reference>
<reference key="2">
    <citation type="submission" date="1996-05" db="EMBL/GenBank/DDBJ databases">
        <authorList>
            <person name="Glover C.V.C."/>
            <person name="Beckman J.S."/>
            <person name="Bidwai A.P."/>
            <person name="Carlson L.K."/>
            <person name="Cerjan C.M."/>
            <person name="Crawford M.J."/>
            <person name="McCann R.O."/>
            <person name="Saxena A."/>
            <person name="Zhao W."/>
        </authorList>
    </citation>
    <scope>NUCLEOTIDE SEQUENCE [GENOMIC DNA]</scope>
    <source>
        <strain>Oregon-R</strain>
    </source>
</reference>
<reference key="3">
    <citation type="journal article" date="2000" name="Science">
        <title>The genome sequence of Drosophila melanogaster.</title>
        <authorList>
            <person name="Adams M.D."/>
            <person name="Celniker S.E."/>
            <person name="Holt R.A."/>
            <person name="Evans C.A."/>
            <person name="Gocayne J.D."/>
            <person name="Amanatides P.G."/>
            <person name="Scherer S.E."/>
            <person name="Li P.W."/>
            <person name="Hoskins R.A."/>
            <person name="Galle R.F."/>
            <person name="George R.A."/>
            <person name="Lewis S.E."/>
            <person name="Richards S."/>
            <person name="Ashburner M."/>
            <person name="Henderson S.N."/>
            <person name="Sutton G.G."/>
            <person name="Wortman J.R."/>
            <person name="Yandell M.D."/>
            <person name="Zhang Q."/>
            <person name="Chen L.X."/>
            <person name="Brandon R.C."/>
            <person name="Rogers Y.-H.C."/>
            <person name="Blazej R.G."/>
            <person name="Champe M."/>
            <person name="Pfeiffer B.D."/>
            <person name="Wan K.H."/>
            <person name="Doyle C."/>
            <person name="Baxter E.G."/>
            <person name="Helt G."/>
            <person name="Nelson C.R."/>
            <person name="Miklos G.L.G."/>
            <person name="Abril J.F."/>
            <person name="Agbayani A."/>
            <person name="An H.-J."/>
            <person name="Andrews-Pfannkoch C."/>
            <person name="Baldwin D."/>
            <person name="Ballew R.M."/>
            <person name="Basu A."/>
            <person name="Baxendale J."/>
            <person name="Bayraktaroglu L."/>
            <person name="Beasley E.M."/>
            <person name="Beeson K.Y."/>
            <person name="Benos P.V."/>
            <person name="Berman B.P."/>
            <person name="Bhandari D."/>
            <person name="Bolshakov S."/>
            <person name="Borkova D."/>
            <person name="Botchan M.R."/>
            <person name="Bouck J."/>
            <person name="Brokstein P."/>
            <person name="Brottier P."/>
            <person name="Burtis K.C."/>
            <person name="Busam D.A."/>
            <person name="Butler H."/>
            <person name="Cadieu E."/>
            <person name="Center A."/>
            <person name="Chandra I."/>
            <person name="Cherry J.M."/>
            <person name="Cawley S."/>
            <person name="Dahlke C."/>
            <person name="Davenport L.B."/>
            <person name="Davies P."/>
            <person name="de Pablos B."/>
            <person name="Delcher A."/>
            <person name="Deng Z."/>
            <person name="Mays A.D."/>
            <person name="Dew I."/>
            <person name="Dietz S.M."/>
            <person name="Dodson K."/>
            <person name="Doup L.E."/>
            <person name="Downes M."/>
            <person name="Dugan-Rocha S."/>
            <person name="Dunkov B.C."/>
            <person name="Dunn P."/>
            <person name="Durbin K.J."/>
            <person name="Evangelista C.C."/>
            <person name="Ferraz C."/>
            <person name="Ferriera S."/>
            <person name="Fleischmann W."/>
            <person name="Fosler C."/>
            <person name="Gabrielian A.E."/>
            <person name="Garg N.S."/>
            <person name="Gelbart W.M."/>
            <person name="Glasser K."/>
            <person name="Glodek A."/>
            <person name="Gong F."/>
            <person name="Gorrell J.H."/>
            <person name="Gu Z."/>
            <person name="Guan P."/>
            <person name="Harris M."/>
            <person name="Harris N.L."/>
            <person name="Harvey D.A."/>
            <person name="Heiman T.J."/>
            <person name="Hernandez J.R."/>
            <person name="Houck J."/>
            <person name="Hostin D."/>
            <person name="Houston K.A."/>
            <person name="Howland T.J."/>
            <person name="Wei M.-H."/>
            <person name="Ibegwam C."/>
            <person name="Jalali M."/>
            <person name="Kalush F."/>
            <person name="Karpen G.H."/>
            <person name="Ke Z."/>
            <person name="Kennison J.A."/>
            <person name="Ketchum K.A."/>
            <person name="Kimmel B.E."/>
            <person name="Kodira C.D."/>
            <person name="Kraft C.L."/>
            <person name="Kravitz S."/>
            <person name="Kulp D."/>
            <person name="Lai Z."/>
            <person name="Lasko P."/>
            <person name="Lei Y."/>
            <person name="Levitsky A.A."/>
            <person name="Li J.H."/>
            <person name="Li Z."/>
            <person name="Liang Y."/>
            <person name="Lin X."/>
            <person name="Liu X."/>
            <person name="Mattei B."/>
            <person name="McIntosh T.C."/>
            <person name="McLeod M.P."/>
            <person name="McPherson D."/>
            <person name="Merkulov G."/>
            <person name="Milshina N.V."/>
            <person name="Mobarry C."/>
            <person name="Morris J."/>
            <person name="Moshrefi A."/>
            <person name="Mount S.M."/>
            <person name="Moy M."/>
            <person name="Murphy B."/>
            <person name="Murphy L."/>
            <person name="Muzny D.M."/>
            <person name="Nelson D.L."/>
            <person name="Nelson D.R."/>
            <person name="Nelson K.A."/>
            <person name="Nixon K."/>
            <person name="Nusskern D.R."/>
            <person name="Pacleb J.M."/>
            <person name="Palazzolo M."/>
            <person name="Pittman G.S."/>
            <person name="Pan S."/>
            <person name="Pollard J."/>
            <person name="Puri V."/>
            <person name="Reese M.G."/>
            <person name="Reinert K."/>
            <person name="Remington K."/>
            <person name="Saunders R.D.C."/>
            <person name="Scheeler F."/>
            <person name="Shen H."/>
            <person name="Shue B.C."/>
            <person name="Siden-Kiamos I."/>
            <person name="Simpson M."/>
            <person name="Skupski M.P."/>
            <person name="Smith T.J."/>
            <person name="Spier E."/>
            <person name="Spradling A.C."/>
            <person name="Stapleton M."/>
            <person name="Strong R."/>
            <person name="Sun E."/>
            <person name="Svirskas R."/>
            <person name="Tector C."/>
            <person name="Turner R."/>
            <person name="Venter E."/>
            <person name="Wang A.H."/>
            <person name="Wang X."/>
            <person name="Wang Z.-Y."/>
            <person name="Wassarman D.A."/>
            <person name="Weinstock G.M."/>
            <person name="Weissenbach J."/>
            <person name="Williams S.M."/>
            <person name="Woodage T."/>
            <person name="Worley K.C."/>
            <person name="Wu D."/>
            <person name="Yang S."/>
            <person name="Yao Q.A."/>
            <person name="Ye J."/>
            <person name="Yeh R.-F."/>
            <person name="Zaveri J.S."/>
            <person name="Zhan M."/>
            <person name="Zhang G."/>
            <person name="Zhao Q."/>
            <person name="Zheng L."/>
            <person name="Zheng X.H."/>
            <person name="Zhong F.N."/>
            <person name="Zhong W."/>
            <person name="Zhou X."/>
            <person name="Zhu S.C."/>
            <person name="Zhu X."/>
            <person name="Smith H.O."/>
            <person name="Gibbs R.A."/>
            <person name="Myers E.W."/>
            <person name="Rubin G.M."/>
            <person name="Venter J.C."/>
        </authorList>
    </citation>
    <scope>NUCLEOTIDE SEQUENCE [LARGE SCALE GENOMIC DNA]</scope>
    <source>
        <strain>Berkeley</strain>
    </source>
</reference>
<reference key="4">
    <citation type="journal article" date="2002" name="Genome Biol.">
        <title>Annotation of the Drosophila melanogaster euchromatic genome: a systematic review.</title>
        <authorList>
            <person name="Misra S."/>
            <person name="Crosby M.A."/>
            <person name="Mungall C.J."/>
            <person name="Matthews B.B."/>
            <person name="Campbell K.S."/>
            <person name="Hradecky P."/>
            <person name="Huang Y."/>
            <person name="Kaminker J.S."/>
            <person name="Millburn G.H."/>
            <person name="Prochnik S.E."/>
            <person name="Smith C.D."/>
            <person name="Tupy J.L."/>
            <person name="Whitfield E.J."/>
            <person name="Bayraktaroglu L."/>
            <person name="Berman B.P."/>
            <person name="Bettencourt B.R."/>
            <person name="Celniker S.E."/>
            <person name="de Grey A.D.N.J."/>
            <person name="Drysdale R.A."/>
            <person name="Harris N.L."/>
            <person name="Richter J."/>
            <person name="Russo S."/>
            <person name="Schroeder A.J."/>
            <person name="Shu S.Q."/>
            <person name="Stapleton M."/>
            <person name="Yamada C."/>
            <person name="Ashburner M."/>
            <person name="Gelbart W.M."/>
            <person name="Rubin G.M."/>
            <person name="Lewis S.E."/>
        </authorList>
    </citation>
    <scope>GENOME REANNOTATION</scope>
    <scope>ALTERNATIVE SPLICING</scope>
    <source>
        <strain>Berkeley</strain>
    </source>
</reference>
<reference key="5">
    <citation type="journal article" date="2002" name="Genome Biol.">
        <title>A Drosophila full-length cDNA resource.</title>
        <authorList>
            <person name="Stapleton M."/>
            <person name="Carlson J.W."/>
            <person name="Brokstein P."/>
            <person name="Yu C."/>
            <person name="Champe M."/>
            <person name="George R.A."/>
            <person name="Guarin H."/>
            <person name="Kronmiller B."/>
            <person name="Pacleb J.M."/>
            <person name="Park S."/>
            <person name="Wan K.H."/>
            <person name="Rubin G.M."/>
            <person name="Celniker S.E."/>
        </authorList>
    </citation>
    <scope>NUCLEOTIDE SEQUENCE [LARGE SCALE MRNA] (ISOFORM B)</scope>
    <source>
        <strain>Berkeley</strain>
        <tissue>Embryo</tissue>
    </source>
</reference>
<feature type="chain" id="PRO_0000068245" description="Casein kinase II subunit beta">
    <location>
        <begin position="1"/>
        <end position="235"/>
    </location>
</feature>
<feature type="region of interest" description="Disordered" evidence="2">
    <location>
        <begin position="213"/>
        <end position="235"/>
    </location>
</feature>
<feature type="modified residue" description="Phosphoserine; by autocatalysis" evidence="6">
    <location>
        <position position="2"/>
    </location>
</feature>
<feature type="splice variant" id="VSP_011641" description="In isoform B." evidence="4 5">
    <original>QRGQPPKDEEPENNADTVPKRL</original>
    <variation>KN</variation>
    <location>
        <begin position="214"/>
        <end position="235"/>
    </location>
</feature>
<proteinExistence type="evidence at transcript level"/>
<evidence type="ECO:0000250" key="1"/>
<evidence type="ECO:0000256" key="2">
    <source>
        <dbReference type="SAM" id="MobiDB-lite"/>
    </source>
</evidence>
<evidence type="ECO:0000269" key="3">
    <source>
    </source>
</evidence>
<evidence type="ECO:0000303" key="4">
    <source>
    </source>
</evidence>
<evidence type="ECO:0000303" key="5">
    <source>
    </source>
</evidence>
<evidence type="ECO:0000305" key="6"/>